<reference key="1">
    <citation type="journal article" date="2009" name="PLoS ONE">
        <title>Complete genome sequence of Francisella tularensis subspecies holarctica FTNF002-00.</title>
        <authorList>
            <person name="Barabote R.D."/>
            <person name="Xie G."/>
            <person name="Brettin T.S."/>
            <person name="Hinrichs S.H."/>
            <person name="Fey P.D."/>
            <person name="Jay J.J."/>
            <person name="Engle J.L."/>
            <person name="Godbole S.D."/>
            <person name="Noronha J.M."/>
            <person name="Scheuermann R.H."/>
            <person name="Zhou L.W."/>
            <person name="Lion C."/>
            <person name="Dempsey M.P."/>
        </authorList>
    </citation>
    <scope>NUCLEOTIDE SEQUENCE [LARGE SCALE GENOMIC DNA]</scope>
    <source>
        <strain>FTNF002-00 / FTA</strain>
    </source>
</reference>
<dbReference type="EMBL" id="CP000803">
    <property type="protein sequence ID" value="ABU62380.1"/>
    <property type="molecule type" value="Genomic_DNA"/>
</dbReference>
<dbReference type="RefSeq" id="WP_003017341.1">
    <property type="nucleotide sequence ID" value="NC_009749.1"/>
</dbReference>
<dbReference type="SMR" id="A7NEH7"/>
<dbReference type="KEGG" id="fta:FTA_1905"/>
<dbReference type="HOGENOM" id="CLU_085114_3_0_6"/>
<dbReference type="GO" id="GO:0005886">
    <property type="term" value="C:plasma membrane"/>
    <property type="evidence" value="ECO:0007669"/>
    <property type="project" value="UniProtKB-SubCell"/>
</dbReference>
<dbReference type="GO" id="GO:0045259">
    <property type="term" value="C:proton-transporting ATP synthase complex"/>
    <property type="evidence" value="ECO:0007669"/>
    <property type="project" value="UniProtKB-KW"/>
</dbReference>
<dbReference type="GO" id="GO:0046933">
    <property type="term" value="F:proton-transporting ATP synthase activity, rotational mechanism"/>
    <property type="evidence" value="ECO:0007669"/>
    <property type="project" value="UniProtKB-UniRule"/>
</dbReference>
<dbReference type="Gene3D" id="1.10.520.20">
    <property type="entry name" value="N-terminal domain of the delta subunit of the F1F0-ATP synthase"/>
    <property type="match status" value="1"/>
</dbReference>
<dbReference type="HAMAP" id="MF_01416">
    <property type="entry name" value="ATP_synth_delta_bact"/>
    <property type="match status" value="1"/>
</dbReference>
<dbReference type="InterPro" id="IPR026015">
    <property type="entry name" value="ATP_synth_OSCP/delta_N_sf"/>
</dbReference>
<dbReference type="InterPro" id="IPR020781">
    <property type="entry name" value="ATPase_OSCP/d_CS"/>
</dbReference>
<dbReference type="InterPro" id="IPR000711">
    <property type="entry name" value="ATPase_OSCP/dsu"/>
</dbReference>
<dbReference type="NCBIfam" id="TIGR01145">
    <property type="entry name" value="ATP_synt_delta"/>
    <property type="match status" value="1"/>
</dbReference>
<dbReference type="NCBIfam" id="NF004402">
    <property type="entry name" value="PRK05758.2-2"/>
    <property type="match status" value="1"/>
</dbReference>
<dbReference type="PANTHER" id="PTHR11910">
    <property type="entry name" value="ATP SYNTHASE DELTA CHAIN"/>
    <property type="match status" value="1"/>
</dbReference>
<dbReference type="Pfam" id="PF00213">
    <property type="entry name" value="OSCP"/>
    <property type="match status" value="1"/>
</dbReference>
<dbReference type="PRINTS" id="PR00125">
    <property type="entry name" value="ATPASEDELTA"/>
</dbReference>
<dbReference type="SUPFAM" id="SSF47928">
    <property type="entry name" value="N-terminal domain of the delta subunit of the F1F0-ATP synthase"/>
    <property type="match status" value="1"/>
</dbReference>
<dbReference type="PROSITE" id="PS00389">
    <property type="entry name" value="ATPASE_DELTA"/>
    <property type="match status" value="1"/>
</dbReference>
<keyword id="KW-0066">ATP synthesis</keyword>
<keyword id="KW-0997">Cell inner membrane</keyword>
<keyword id="KW-1003">Cell membrane</keyword>
<keyword id="KW-0139">CF(1)</keyword>
<keyword id="KW-0375">Hydrogen ion transport</keyword>
<keyword id="KW-0406">Ion transport</keyword>
<keyword id="KW-0472">Membrane</keyword>
<keyword id="KW-0813">Transport</keyword>
<gene>
    <name evidence="1" type="primary">atpH</name>
    <name type="ordered locus">FTA_1905</name>
</gene>
<feature type="chain" id="PRO_1000184714" description="ATP synthase subunit delta">
    <location>
        <begin position="1"/>
        <end position="174"/>
    </location>
</feature>
<comment type="function">
    <text evidence="1">F(1)F(0) ATP synthase produces ATP from ADP in the presence of a proton or sodium gradient. F-type ATPases consist of two structural domains, F(1) containing the extramembraneous catalytic core and F(0) containing the membrane proton channel, linked together by a central stalk and a peripheral stalk. During catalysis, ATP synthesis in the catalytic domain of F(1) is coupled via a rotary mechanism of the central stalk subunits to proton translocation.</text>
</comment>
<comment type="function">
    <text evidence="1">This protein is part of the stalk that links CF(0) to CF(1). It either transmits conformational changes from CF(0) to CF(1) or is implicated in proton conduction.</text>
</comment>
<comment type="subunit">
    <text evidence="1">F-type ATPases have 2 components, F(1) - the catalytic core - and F(0) - the membrane proton channel. F(1) has five subunits: alpha(3), beta(3), gamma(1), delta(1), epsilon(1). F(0) has three main subunits: a(1), b(2) and c(10-14). The alpha and beta chains form an alternating ring which encloses part of the gamma chain. F(1) is attached to F(0) by a central stalk formed by the gamma and epsilon chains, while a peripheral stalk is formed by the delta and b chains.</text>
</comment>
<comment type="subcellular location">
    <subcellularLocation>
        <location evidence="1">Cell inner membrane</location>
        <topology evidence="1">Peripheral membrane protein</topology>
    </subcellularLocation>
</comment>
<comment type="similarity">
    <text evidence="1">Belongs to the ATPase delta chain family.</text>
</comment>
<proteinExistence type="inferred from homology"/>
<organism>
    <name type="scientific">Francisella tularensis subsp. holarctica (strain FTNF002-00 / FTA)</name>
    <dbReference type="NCBI Taxonomy" id="458234"/>
    <lineage>
        <taxon>Bacteria</taxon>
        <taxon>Pseudomonadati</taxon>
        <taxon>Pseudomonadota</taxon>
        <taxon>Gammaproteobacteria</taxon>
        <taxon>Thiotrichales</taxon>
        <taxon>Francisellaceae</taxon>
        <taxon>Francisella</taxon>
    </lineage>
</organism>
<evidence type="ECO:0000255" key="1">
    <source>
        <dbReference type="HAMAP-Rule" id="MF_01416"/>
    </source>
</evidence>
<protein>
    <recommendedName>
        <fullName evidence="1">ATP synthase subunit delta</fullName>
    </recommendedName>
    <alternativeName>
        <fullName evidence="1">ATP synthase F(1) sector subunit delta</fullName>
    </alternativeName>
    <alternativeName>
        <fullName evidence="1">F-type ATPase subunit delta</fullName>
        <shortName evidence="1">F-ATPase subunit delta</shortName>
    </alternativeName>
</protein>
<name>ATPD_FRATF</name>
<sequence length="174" mass="19202">MTNISVIAKPYAKAAFEFANEHNLLQQWSKLLQTFSELIKDKSVAAIVSSPTISQIEVVDALKKQLDENFFNFLALIAENKKMLIMPEIADQFESIKNIHNNVRVADVTLAYATDKNILDSLKTSLEKKFGCTIDMHINIDPAIIGGAVVKVGDTVIDSSVSGHLEKLKSILLS</sequence>
<accession>A7NEH7</accession>